<gene>
    <name evidence="1" type="primary">ligA</name>
    <name type="ordered locus">JJD26997_1083</name>
</gene>
<feature type="chain" id="PRO_0000340334" description="DNA ligase">
    <location>
        <begin position="1"/>
        <end position="647"/>
    </location>
</feature>
<feature type="domain" description="BRCT" evidence="1">
    <location>
        <begin position="570"/>
        <end position="647"/>
    </location>
</feature>
<feature type="active site" description="N6-AMP-lysine intermediate" evidence="1">
    <location>
        <position position="107"/>
    </location>
</feature>
<feature type="binding site" evidence="1">
    <location>
        <begin position="30"/>
        <end position="34"/>
    </location>
    <ligand>
        <name>NAD(+)</name>
        <dbReference type="ChEBI" id="CHEBI:57540"/>
    </ligand>
</feature>
<feature type="binding site" evidence="1">
    <location>
        <begin position="79"/>
        <end position="80"/>
    </location>
    <ligand>
        <name>NAD(+)</name>
        <dbReference type="ChEBI" id="CHEBI:57540"/>
    </ligand>
</feature>
<feature type="binding site" evidence="1">
    <location>
        <position position="105"/>
    </location>
    <ligand>
        <name>NAD(+)</name>
        <dbReference type="ChEBI" id="CHEBI:57540"/>
    </ligand>
</feature>
<feature type="binding site" evidence="1">
    <location>
        <position position="128"/>
    </location>
    <ligand>
        <name>NAD(+)</name>
        <dbReference type="ChEBI" id="CHEBI:57540"/>
    </ligand>
</feature>
<feature type="binding site" evidence="1">
    <location>
        <position position="162"/>
    </location>
    <ligand>
        <name>NAD(+)</name>
        <dbReference type="ChEBI" id="CHEBI:57540"/>
    </ligand>
</feature>
<feature type="binding site" evidence="1">
    <location>
        <position position="301"/>
    </location>
    <ligand>
        <name>NAD(+)</name>
        <dbReference type="ChEBI" id="CHEBI:57540"/>
    </ligand>
</feature>
<feature type="binding site" evidence="1">
    <location>
        <position position="395"/>
    </location>
    <ligand>
        <name>Zn(2+)</name>
        <dbReference type="ChEBI" id="CHEBI:29105"/>
    </ligand>
</feature>
<feature type="binding site" evidence="1">
    <location>
        <position position="398"/>
    </location>
    <ligand>
        <name>Zn(2+)</name>
        <dbReference type="ChEBI" id="CHEBI:29105"/>
    </ligand>
</feature>
<feature type="binding site" evidence="1">
    <location>
        <position position="411"/>
    </location>
    <ligand>
        <name>Zn(2+)</name>
        <dbReference type="ChEBI" id="CHEBI:29105"/>
    </ligand>
</feature>
<feature type="binding site" evidence="1">
    <location>
        <position position="416"/>
    </location>
    <ligand>
        <name>Zn(2+)</name>
        <dbReference type="ChEBI" id="CHEBI:29105"/>
    </ligand>
</feature>
<proteinExistence type="inferred from homology"/>
<sequence>MKKEEYLEKVALANLWMRAYYEKDEPLASDEEYDALIRELRVFEEQNKDEVSKDSPTQKIAPTIQSEFKKIAHLKRMWSMEDVFDESELRAWAKRAKCEKNFFIEPKFDGASLNLLYENGKLVSGATRGDGEVGEDITLNVFEIENIPKNIAYKKRIEIRGEVVILKDDFEKINEKRALLNQSLFANPRNAASGSLRQLDTSITKERNLKFYPWGVGENTLNFTKHSEVMQFVRDLGFLKDDFIKLCANLDEVLKAYDELLTLREKKPMMMDGMVVRVDDLALCEELGYTVKFPKFMAAFKFPALEKTTRLIGINLQVGRSGVITPVAVLEPVNLDGVVVKSATLHNFDEIARLDVKINDFVSVIRSGDVIPKITKVFKERREGLEMEISHPKLCPTCQSELLDEGTLIKCQNIDCEDRLVNSIIHFVSKKCLNIDGLGENIVELLYKHKKITTLESIFHLKFSDFEGLEGFKEKKINNLLNAIEQARECELFRFITALGIEHIGEVAAKKLSLSFGKEWHKQSFEAYVNLEGFGEQMALSLCEFTRVNHTRIDEFYKLLNLKIEKLEVKSDSVIFGKTFVITGTLSRPRDEFKALIENLGGKVSGSVSKKTDYVLFGEEAGSKLSKAKELEVKCIDESAFNELVKE</sequence>
<dbReference type="EC" id="6.5.1.2" evidence="1"/>
<dbReference type="EMBL" id="CP000768">
    <property type="protein sequence ID" value="ABS44642.1"/>
    <property type="molecule type" value="Genomic_DNA"/>
</dbReference>
<dbReference type="SMR" id="A7H3U4"/>
<dbReference type="KEGG" id="cjd:JJD26997_1083"/>
<dbReference type="HOGENOM" id="CLU_007764_2_1_7"/>
<dbReference type="Proteomes" id="UP000002302">
    <property type="component" value="Chromosome"/>
</dbReference>
<dbReference type="GO" id="GO:0005829">
    <property type="term" value="C:cytosol"/>
    <property type="evidence" value="ECO:0007669"/>
    <property type="project" value="TreeGrafter"/>
</dbReference>
<dbReference type="GO" id="GO:0003911">
    <property type="term" value="F:DNA ligase (NAD+) activity"/>
    <property type="evidence" value="ECO:0007669"/>
    <property type="project" value="UniProtKB-UniRule"/>
</dbReference>
<dbReference type="GO" id="GO:0046872">
    <property type="term" value="F:metal ion binding"/>
    <property type="evidence" value="ECO:0007669"/>
    <property type="project" value="UniProtKB-KW"/>
</dbReference>
<dbReference type="GO" id="GO:0006281">
    <property type="term" value="P:DNA repair"/>
    <property type="evidence" value="ECO:0007669"/>
    <property type="project" value="UniProtKB-KW"/>
</dbReference>
<dbReference type="GO" id="GO:0006260">
    <property type="term" value="P:DNA replication"/>
    <property type="evidence" value="ECO:0007669"/>
    <property type="project" value="UniProtKB-KW"/>
</dbReference>
<dbReference type="CDD" id="cd17748">
    <property type="entry name" value="BRCT_DNA_ligase_like"/>
    <property type="match status" value="1"/>
</dbReference>
<dbReference type="CDD" id="cd00114">
    <property type="entry name" value="LIGANc"/>
    <property type="match status" value="1"/>
</dbReference>
<dbReference type="FunFam" id="2.40.50.140:FF:000012">
    <property type="entry name" value="DNA ligase"/>
    <property type="match status" value="1"/>
</dbReference>
<dbReference type="Gene3D" id="1.10.150.20">
    <property type="entry name" value="5' to 3' exonuclease, C-terminal subdomain"/>
    <property type="match status" value="2"/>
</dbReference>
<dbReference type="Gene3D" id="3.40.50.10190">
    <property type="entry name" value="BRCT domain"/>
    <property type="match status" value="1"/>
</dbReference>
<dbReference type="Gene3D" id="3.30.470.30">
    <property type="entry name" value="DNA ligase/mRNA capping enzyme"/>
    <property type="match status" value="1"/>
</dbReference>
<dbReference type="Gene3D" id="1.10.287.610">
    <property type="entry name" value="Helix hairpin bin"/>
    <property type="match status" value="1"/>
</dbReference>
<dbReference type="Gene3D" id="2.40.50.140">
    <property type="entry name" value="Nucleic acid-binding proteins"/>
    <property type="match status" value="1"/>
</dbReference>
<dbReference type="HAMAP" id="MF_01588">
    <property type="entry name" value="DNA_ligase_A"/>
    <property type="match status" value="1"/>
</dbReference>
<dbReference type="InterPro" id="IPR001357">
    <property type="entry name" value="BRCT_dom"/>
</dbReference>
<dbReference type="InterPro" id="IPR036420">
    <property type="entry name" value="BRCT_dom_sf"/>
</dbReference>
<dbReference type="InterPro" id="IPR041663">
    <property type="entry name" value="DisA/LigA_HHH"/>
</dbReference>
<dbReference type="InterPro" id="IPR001679">
    <property type="entry name" value="DNA_ligase"/>
</dbReference>
<dbReference type="InterPro" id="IPR018239">
    <property type="entry name" value="DNA_ligase_AS"/>
</dbReference>
<dbReference type="InterPro" id="IPR033136">
    <property type="entry name" value="DNA_ligase_CS"/>
</dbReference>
<dbReference type="InterPro" id="IPR013839">
    <property type="entry name" value="DNAligase_adenylation"/>
</dbReference>
<dbReference type="InterPro" id="IPR013840">
    <property type="entry name" value="DNAligase_N"/>
</dbReference>
<dbReference type="InterPro" id="IPR012340">
    <property type="entry name" value="NA-bd_OB-fold"/>
</dbReference>
<dbReference type="InterPro" id="IPR004150">
    <property type="entry name" value="NAD_DNA_ligase_OB"/>
</dbReference>
<dbReference type="InterPro" id="IPR010994">
    <property type="entry name" value="RuvA_2-like"/>
</dbReference>
<dbReference type="NCBIfam" id="TIGR00575">
    <property type="entry name" value="dnlj"/>
    <property type="match status" value="1"/>
</dbReference>
<dbReference type="NCBIfam" id="NF005932">
    <property type="entry name" value="PRK07956.1"/>
    <property type="match status" value="1"/>
</dbReference>
<dbReference type="PANTHER" id="PTHR23389">
    <property type="entry name" value="CHROMOSOME TRANSMISSION FIDELITY FACTOR 18"/>
    <property type="match status" value="1"/>
</dbReference>
<dbReference type="PANTHER" id="PTHR23389:SF9">
    <property type="entry name" value="DNA LIGASE"/>
    <property type="match status" value="1"/>
</dbReference>
<dbReference type="Pfam" id="PF00533">
    <property type="entry name" value="BRCT"/>
    <property type="match status" value="1"/>
</dbReference>
<dbReference type="Pfam" id="PF01653">
    <property type="entry name" value="DNA_ligase_aden"/>
    <property type="match status" value="1"/>
</dbReference>
<dbReference type="Pfam" id="PF03120">
    <property type="entry name" value="DNA_ligase_OB"/>
    <property type="match status" value="1"/>
</dbReference>
<dbReference type="Pfam" id="PF12826">
    <property type="entry name" value="HHH_2"/>
    <property type="match status" value="1"/>
</dbReference>
<dbReference type="PIRSF" id="PIRSF001604">
    <property type="entry name" value="LigA"/>
    <property type="match status" value="1"/>
</dbReference>
<dbReference type="SMART" id="SM00292">
    <property type="entry name" value="BRCT"/>
    <property type="match status" value="1"/>
</dbReference>
<dbReference type="SMART" id="SM00532">
    <property type="entry name" value="LIGANc"/>
    <property type="match status" value="1"/>
</dbReference>
<dbReference type="SUPFAM" id="SSF52113">
    <property type="entry name" value="BRCT domain"/>
    <property type="match status" value="1"/>
</dbReference>
<dbReference type="SUPFAM" id="SSF56091">
    <property type="entry name" value="DNA ligase/mRNA capping enzyme, catalytic domain"/>
    <property type="match status" value="1"/>
</dbReference>
<dbReference type="SUPFAM" id="SSF50249">
    <property type="entry name" value="Nucleic acid-binding proteins"/>
    <property type="match status" value="1"/>
</dbReference>
<dbReference type="SUPFAM" id="SSF47781">
    <property type="entry name" value="RuvA domain 2-like"/>
    <property type="match status" value="1"/>
</dbReference>
<dbReference type="PROSITE" id="PS50172">
    <property type="entry name" value="BRCT"/>
    <property type="match status" value="1"/>
</dbReference>
<dbReference type="PROSITE" id="PS01055">
    <property type="entry name" value="DNA_LIGASE_N1"/>
    <property type="match status" value="1"/>
</dbReference>
<dbReference type="PROSITE" id="PS01056">
    <property type="entry name" value="DNA_LIGASE_N2"/>
    <property type="match status" value="1"/>
</dbReference>
<name>DNLJ_CAMJD</name>
<evidence type="ECO:0000255" key="1">
    <source>
        <dbReference type="HAMAP-Rule" id="MF_01588"/>
    </source>
</evidence>
<keyword id="KW-0227">DNA damage</keyword>
<keyword id="KW-0234">DNA repair</keyword>
<keyword id="KW-0235">DNA replication</keyword>
<keyword id="KW-0436">Ligase</keyword>
<keyword id="KW-0460">Magnesium</keyword>
<keyword id="KW-0464">Manganese</keyword>
<keyword id="KW-0479">Metal-binding</keyword>
<keyword id="KW-0520">NAD</keyword>
<keyword id="KW-0862">Zinc</keyword>
<comment type="function">
    <text evidence="1">DNA ligase that catalyzes the formation of phosphodiester linkages between 5'-phosphoryl and 3'-hydroxyl groups in double-stranded DNA using NAD as a coenzyme and as the energy source for the reaction. It is essential for DNA replication and repair of damaged DNA.</text>
</comment>
<comment type="catalytic activity">
    <reaction evidence="1">
        <text>NAD(+) + (deoxyribonucleotide)n-3'-hydroxyl + 5'-phospho-(deoxyribonucleotide)m = (deoxyribonucleotide)n+m + AMP + beta-nicotinamide D-nucleotide.</text>
        <dbReference type="EC" id="6.5.1.2"/>
    </reaction>
</comment>
<comment type="cofactor">
    <cofactor evidence="1">
        <name>Mg(2+)</name>
        <dbReference type="ChEBI" id="CHEBI:18420"/>
    </cofactor>
    <cofactor evidence="1">
        <name>Mn(2+)</name>
        <dbReference type="ChEBI" id="CHEBI:29035"/>
    </cofactor>
</comment>
<comment type="similarity">
    <text evidence="1">Belongs to the NAD-dependent DNA ligase family. LigA subfamily.</text>
</comment>
<accession>A7H3U4</accession>
<organism>
    <name type="scientific">Campylobacter jejuni subsp. doylei (strain ATCC BAA-1458 / RM4099 / 269.97)</name>
    <dbReference type="NCBI Taxonomy" id="360109"/>
    <lineage>
        <taxon>Bacteria</taxon>
        <taxon>Pseudomonadati</taxon>
        <taxon>Campylobacterota</taxon>
        <taxon>Epsilonproteobacteria</taxon>
        <taxon>Campylobacterales</taxon>
        <taxon>Campylobacteraceae</taxon>
        <taxon>Campylobacter</taxon>
    </lineage>
</organism>
<protein>
    <recommendedName>
        <fullName evidence="1">DNA ligase</fullName>
        <ecNumber evidence="1">6.5.1.2</ecNumber>
    </recommendedName>
    <alternativeName>
        <fullName evidence="1">Polydeoxyribonucleotide synthase [NAD(+)]</fullName>
    </alternativeName>
</protein>
<reference key="1">
    <citation type="submission" date="2007-07" db="EMBL/GenBank/DDBJ databases">
        <title>Complete genome sequence of Campylobacter jejuni subsp doylei 269.97 isolated from human blood.</title>
        <authorList>
            <person name="Fouts D.E."/>
            <person name="Mongodin E.F."/>
            <person name="Puiu D."/>
            <person name="Sebastian Y."/>
            <person name="Miller W.G."/>
            <person name="Mandrell R.E."/>
            <person name="Lastovica A.J."/>
            <person name="Nelson K.E."/>
        </authorList>
    </citation>
    <scope>NUCLEOTIDE SEQUENCE [LARGE SCALE GENOMIC DNA]</scope>
    <source>
        <strain>ATCC BAA-1458 / RM4099 / 269.97</strain>
    </source>
</reference>